<sequence length="247" mass="27782">MEMAPAAQVASNPRTVEDIFKDYSARRGALVRALTSDVDEFFGLCDPDKENLCLYGLANGSWEVALPAEEVPPELPEPALGINFARDGMNRRDWLSLVAVHSDSWLVSVAFFFAARLNGNERKRLFNMINDLPTVYEALVDRKHVRDRSGVDSSGKSKHSTKRTGEGQVKRSRVVAEEYEDDDEEHNETFCGTCGGLYNANEFWIGCDICERWFHGKCVRITPAKAEHIKHYKCPDCSSSSSKKTRL</sequence>
<evidence type="ECO:0000250" key="1"/>
<evidence type="ECO:0000255" key="2">
    <source>
        <dbReference type="PROSITE-ProRule" id="PRU00146"/>
    </source>
</evidence>
<evidence type="ECO:0000256" key="3">
    <source>
        <dbReference type="SAM" id="MobiDB-lite"/>
    </source>
</evidence>
<evidence type="ECO:0000305" key="4"/>
<keyword id="KW-0156">Chromatin regulator</keyword>
<keyword id="KW-0479">Metal-binding</keyword>
<keyword id="KW-0539">Nucleus</keyword>
<keyword id="KW-1185">Reference proteome</keyword>
<keyword id="KW-0804">Transcription</keyword>
<keyword id="KW-0805">Transcription regulation</keyword>
<keyword id="KW-0862">Zinc</keyword>
<keyword id="KW-0863">Zinc-finger</keyword>
<name>ALFL3_ORYSI</name>
<protein>
    <recommendedName>
        <fullName>PHD finger protein ALFIN-LIKE 3</fullName>
    </recommendedName>
</protein>
<reference key="1">
    <citation type="journal article" date="2005" name="PLoS Biol.">
        <title>The genomes of Oryza sativa: a history of duplications.</title>
        <authorList>
            <person name="Yu J."/>
            <person name="Wang J."/>
            <person name="Lin W."/>
            <person name="Li S."/>
            <person name="Li H."/>
            <person name="Zhou J."/>
            <person name="Ni P."/>
            <person name="Dong W."/>
            <person name="Hu S."/>
            <person name="Zeng C."/>
            <person name="Zhang J."/>
            <person name="Zhang Y."/>
            <person name="Li R."/>
            <person name="Xu Z."/>
            <person name="Li S."/>
            <person name="Li X."/>
            <person name="Zheng H."/>
            <person name="Cong L."/>
            <person name="Lin L."/>
            <person name="Yin J."/>
            <person name="Geng J."/>
            <person name="Li G."/>
            <person name="Shi J."/>
            <person name="Liu J."/>
            <person name="Lv H."/>
            <person name="Li J."/>
            <person name="Wang J."/>
            <person name="Deng Y."/>
            <person name="Ran L."/>
            <person name="Shi X."/>
            <person name="Wang X."/>
            <person name="Wu Q."/>
            <person name="Li C."/>
            <person name="Ren X."/>
            <person name="Wang J."/>
            <person name="Wang X."/>
            <person name="Li D."/>
            <person name="Liu D."/>
            <person name="Zhang X."/>
            <person name="Ji Z."/>
            <person name="Zhao W."/>
            <person name="Sun Y."/>
            <person name="Zhang Z."/>
            <person name="Bao J."/>
            <person name="Han Y."/>
            <person name="Dong L."/>
            <person name="Ji J."/>
            <person name="Chen P."/>
            <person name="Wu S."/>
            <person name="Liu J."/>
            <person name="Xiao Y."/>
            <person name="Bu D."/>
            <person name="Tan J."/>
            <person name="Yang L."/>
            <person name="Ye C."/>
            <person name="Zhang J."/>
            <person name="Xu J."/>
            <person name="Zhou Y."/>
            <person name="Yu Y."/>
            <person name="Zhang B."/>
            <person name="Zhuang S."/>
            <person name="Wei H."/>
            <person name="Liu B."/>
            <person name="Lei M."/>
            <person name="Yu H."/>
            <person name="Li Y."/>
            <person name="Xu H."/>
            <person name="Wei S."/>
            <person name="He X."/>
            <person name="Fang L."/>
            <person name="Zhang Z."/>
            <person name="Zhang Y."/>
            <person name="Huang X."/>
            <person name="Su Z."/>
            <person name="Tong W."/>
            <person name="Li J."/>
            <person name="Tong Z."/>
            <person name="Li S."/>
            <person name="Ye J."/>
            <person name="Wang L."/>
            <person name="Fang L."/>
            <person name="Lei T."/>
            <person name="Chen C.-S."/>
            <person name="Chen H.-C."/>
            <person name="Xu Z."/>
            <person name="Li H."/>
            <person name="Huang H."/>
            <person name="Zhang F."/>
            <person name="Xu H."/>
            <person name="Li N."/>
            <person name="Zhao C."/>
            <person name="Li S."/>
            <person name="Dong L."/>
            <person name="Huang Y."/>
            <person name="Li L."/>
            <person name="Xi Y."/>
            <person name="Qi Q."/>
            <person name="Li W."/>
            <person name="Zhang B."/>
            <person name="Hu W."/>
            <person name="Zhang Y."/>
            <person name="Tian X."/>
            <person name="Jiao Y."/>
            <person name="Liang X."/>
            <person name="Jin J."/>
            <person name="Gao L."/>
            <person name="Zheng W."/>
            <person name="Hao B."/>
            <person name="Liu S.-M."/>
            <person name="Wang W."/>
            <person name="Yuan L."/>
            <person name="Cao M."/>
            <person name="McDermott J."/>
            <person name="Samudrala R."/>
            <person name="Wang J."/>
            <person name="Wong G.K.-S."/>
            <person name="Yang H."/>
        </authorList>
    </citation>
    <scope>NUCLEOTIDE SEQUENCE [LARGE SCALE GENOMIC DNA]</scope>
    <source>
        <strain>cv. 93-11</strain>
    </source>
</reference>
<feature type="chain" id="PRO_0000412940" description="PHD finger protein ALFIN-LIKE 3">
    <location>
        <begin position="1"/>
        <end position="247"/>
    </location>
</feature>
<feature type="zinc finger region" description="PHD-type" evidence="2">
    <location>
        <begin position="188"/>
        <end position="240"/>
    </location>
</feature>
<feature type="region of interest" description="Disordered" evidence="3">
    <location>
        <begin position="147"/>
        <end position="178"/>
    </location>
</feature>
<feature type="site" description="Histone H3K4me3 binding" evidence="1">
    <location>
        <position position="198"/>
    </location>
</feature>
<feature type="site" description="Histone H3K4me3 binding" evidence="1">
    <location>
        <position position="204"/>
    </location>
</feature>
<feature type="site" description="Histone H3K4me3 binding" evidence="1">
    <location>
        <position position="208"/>
    </location>
</feature>
<feature type="site" description="Histone H3K4me3 binding" evidence="1">
    <location>
        <position position="213"/>
    </location>
</feature>
<dbReference type="EMBL" id="CM000128">
    <property type="protein sequence ID" value="EEC76418.1"/>
    <property type="status" value="ALT_INIT"/>
    <property type="molecule type" value="Genomic_DNA"/>
</dbReference>
<dbReference type="SMR" id="B8AMA8"/>
<dbReference type="STRING" id="39946.B8AMA8"/>
<dbReference type="HOGENOM" id="CLU_058315_1_0_1"/>
<dbReference type="Proteomes" id="UP000007015">
    <property type="component" value="Chromosome 3"/>
</dbReference>
<dbReference type="GO" id="GO:0005634">
    <property type="term" value="C:nucleus"/>
    <property type="evidence" value="ECO:0007669"/>
    <property type="project" value="UniProtKB-SubCell"/>
</dbReference>
<dbReference type="GO" id="GO:0042393">
    <property type="term" value="F:histone binding"/>
    <property type="evidence" value="ECO:0007669"/>
    <property type="project" value="InterPro"/>
</dbReference>
<dbReference type="GO" id="GO:0000976">
    <property type="term" value="F:transcription cis-regulatory region binding"/>
    <property type="evidence" value="ECO:0007669"/>
    <property type="project" value="TreeGrafter"/>
</dbReference>
<dbReference type="GO" id="GO:0003712">
    <property type="term" value="F:transcription coregulator activity"/>
    <property type="evidence" value="ECO:0007669"/>
    <property type="project" value="TreeGrafter"/>
</dbReference>
<dbReference type="GO" id="GO:0008270">
    <property type="term" value="F:zinc ion binding"/>
    <property type="evidence" value="ECO:0007669"/>
    <property type="project" value="UniProtKB-KW"/>
</dbReference>
<dbReference type="GO" id="GO:0006325">
    <property type="term" value="P:chromatin organization"/>
    <property type="evidence" value="ECO:0007669"/>
    <property type="project" value="UniProtKB-KW"/>
</dbReference>
<dbReference type="GO" id="GO:0006355">
    <property type="term" value="P:regulation of DNA-templated transcription"/>
    <property type="evidence" value="ECO:0007669"/>
    <property type="project" value="InterPro"/>
</dbReference>
<dbReference type="CDD" id="cd15613">
    <property type="entry name" value="PHD_AL_plant"/>
    <property type="match status" value="1"/>
</dbReference>
<dbReference type="FunFam" id="3.30.40.10:FF:000306">
    <property type="entry name" value="PHD finger alfin-like protein"/>
    <property type="match status" value="1"/>
</dbReference>
<dbReference type="Gene3D" id="3.30.40.10">
    <property type="entry name" value="Zinc/RING finger domain, C3HC4 (zinc finger)"/>
    <property type="match status" value="1"/>
</dbReference>
<dbReference type="InterPro" id="IPR045104">
    <property type="entry name" value="Alfin"/>
</dbReference>
<dbReference type="InterPro" id="IPR021998">
    <property type="entry name" value="Alfin_N"/>
</dbReference>
<dbReference type="InterPro" id="IPR044104">
    <property type="entry name" value="PHD_AL_plant"/>
</dbReference>
<dbReference type="InterPro" id="IPR019786">
    <property type="entry name" value="Zinc_finger_PHD-type_CS"/>
</dbReference>
<dbReference type="InterPro" id="IPR011011">
    <property type="entry name" value="Znf_FYVE_PHD"/>
</dbReference>
<dbReference type="InterPro" id="IPR001965">
    <property type="entry name" value="Znf_PHD"/>
</dbReference>
<dbReference type="InterPro" id="IPR019787">
    <property type="entry name" value="Znf_PHD-finger"/>
</dbReference>
<dbReference type="InterPro" id="IPR013083">
    <property type="entry name" value="Znf_RING/FYVE/PHD"/>
</dbReference>
<dbReference type="PANTHER" id="PTHR12321">
    <property type="entry name" value="CPG BINDING PROTEIN"/>
    <property type="match status" value="1"/>
</dbReference>
<dbReference type="PANTHER" id="PTHR12321:SF116">
    <property type="entry name" value="PHD FINGER PROTEIN ALFIN-LIKE 3"/>
    <property type="match status" value="1"/>
</dbReference>
<dbReference type="Pfam" id="PF12165">
    <property type="entry name" value="Alfin"/>
    <property type="match status" value="1"/>
</dbReference>
<dbReference type="Pfam" id="PF00628">
    <property type="entry name" value="PHD"/>
    <property type="match status" value="1"/>
</dbReference>
<dbReference type="SMART" id="SM00249">
    <property type="entry name" value="PHD"/>
    <property type="match status" value="1"/>
</dbReference>
<dbReference type="SUPFAM" id="SSF57903">
    <property type="entry name" value="FYVE/PHD zinc finger"/>
    <property type="match status" value="1"/>
</dbReference>
<dbReference type="PROSITE" id="PS01359">
    <property type="entry name" value="ZF_PHD_1"/>
    <property type="match status" value="1"/>
</dbReference>
<dbReference type="PROSITE" id="PS50016">
    <property type="entry name" value="ZF_PHD_2"/>
    <property type="match status" value="1"/>
</dbReference>
<gene>
    <name type="ORF">OsI_14081</name>
</gene>
<accession>B8AMA8</accession>
<proteinExistence type="inferred from homology"/>
<comment type="function">
    <text evidence="1">Histone-binding component that specifically recognizes H3 tails trimethylated on 'Lys-4' (H3K4me3), which mark transcription start sites of virtually all active genes.</text>
</comment>
<comment type="subunit">
    <text evidence="1">Interacts with H3K4me3 and to a lesser extent with H3K4me2.</text>
</comment>
<comment type="subcellular location">
    <subcellularLocation>
        <location evidence="1">Nucleus</location>
    </subcellularLocation>
</comment>
<comment type="domain">
    <text evidence="1">The PHD-type zinc finger mediates the binding to H3K4me3.</text>
</comment>
<comment type="similarity">
    <text evidence="4">Belongs to the Alfin family.</text>
</comment>
<comment type="sequence caution" evidence="4">
    <conflict type="erroneous initiation">
        <sequence resource="EMBL-CDS" id="EEC76418"/>
    </conflict>
    <text>Truncated N-terminus.</text>
</comment>
<organism>
    <name type="scientific">Oryza sativa subsp. indica</name>
    <name type="common">Rice</name>
    <dbReference type="NCBI Taxonomy" id="39946"/>
    <lineage>
        <taxon>Eukaryota</taxon>
        <taxon>Viridiplantae</taxon>
        <taxon>Streptophyta</taxon>
        <taxon>Embryophyta</taxon>
        <taxon>Tracheophyta</taxon>
        <taxon>Spermatophyta</taxon>
        <taxon>Magnoliopsida</taxon>
        <taxon>Liliopsida</taxon>
        <taxon>Poales</taxon>
        <taxon>Poaceae</taxon>
        <taxon>BOP clade</taxon>
        <taxon>Oryzoideae</taxon>
        <taxon>Oryzeae</taxon>
        <taxon>Oryzinae</taxon>
        <taxon>Oryza</taxon>
        <taxon>Oryza sativa</taxon>
    </lineage>
</organism>